<keyword id="KW-0202">Cytokine</keyword>
<keyword id="KW-1015">Disulfide bond</keyword>
<keyword id="KW-0325">Glycoprotein</keyword>
<keyword id="KW-0964">Secreted</keyword>
<keyword id="KW-0732">Signal</keyword>
<accession>Q5Q0V6</accession>
<name>IL10_PAPHA</name>
<dbReference type="EMBL" id="AY796417">
    <property type="protein sequence ID" value="AAV85009.1"/>
    <property type="molecule type" value="mRNA"/>
</dbReference>
<dbReference type="SMR" id="Q5Q0V6"/>
<dbReference type="GlyCosmos" id="Q5Q0V6">
    <property type="glycosylation" value="1 site, No reported glycans"/>
</dbReference>
<dbReference type="GO" id="GO:0005615">
    <property type="term" value="C:extracellular space"/>
    <property type="evidence" value="ECO:0000250"/>
    <property type="project" value="UniProtKB"/>
</dbReference>
<dbReference type="GO" id="GO:0005125">
    <property type="term" value="F:cytokine activity"/>
    <property type="evidence" value="ECO:0007669"/>
    <property type="project" value="UniProtKB-KW"/>
</dbReference>
<dbReference type="GO" id="GO:0006955">
    <property type="term" value="P:immune response"/>
    <property type="evidence" value="ECO:0007669"/>
    <property type="project" value="InterPro"/>
</dbReference>
<dbReference type="GO" id="GO:0030889">
    <property type="term" value="P:negative regulation of B cell proliferation"/>
    <property type="evidence" value="ECO:0000250"/>
    <property type="project" value="UniProtKB"/>
</dbReference>
<dbReference type="GO" id="GO:0002719">
    <property type="term" value="P:negative regulation of cytokine production involved in immune response"/>
    <property type="evidence" value="ECO:0000250"/>
    <property type="project" value="UniProtKB"/>
</dbReference>
<dbReference type="GO" id="GO:0050728">
    <property type="term" value="P:negative regulation of inflammatory response"/>
    <property type="evidence" value="ECO:0000250"/>
    <property type="project" value="UniProtKB"/>
</dbReference>
<dbReference type="GO" id="GO:0032715">
    <property type="term" value="P:negative regulation of interleukin-6 production"/>
    <property type="evidence" value="ECO:0000250"/>
    <property type="project" value="UniProtKB"/>
</dbReference>
<dbReference type="GO" id="GO:0051045">
    <property type="term" value="P:negative regulation of membrane protein ectodomain proteolysis"/>
    <property type="evidence" value="ECO:0000250"/>
    <property type="project" value="UniProtKB"/>
</dbReference>
<dbReference type="GO" id="GO:0002904">
    <property type="term" value="P:positive regulation of B cell apoptotic process"/>
    <property type="evidence" value="ECO:0000250"/>
    <property type="project" value="UniProtKB"/>
</dbReference>
<dbReference type="GO" id="GO:0001819">
    <property type="term" value="P:positive regulation of cytokine production"/>
    <property type="evidence" value="ECO:0000250"/>
    <property type="project" value="UniProtKB"/>
</dbReference>
<dbReference type="GO" id="GO:0051091">
    <property type="term" value="P:positive regulation of DNA-binding transcription factor activity"/>
    <property type="evidence" value="ECO:0000250"/>
    <property type="project" value="UniProtKB"/>
</dbReference>
<dbReference type="GO" id="GO:0045893">
    <property type="term" value="P:positive regulation of DNA-templated transcription"/>
    <property type="evidence" value="ECO:0000250"/>
    <property type="project" value="UniProtKB"/>
</dbReference>
<dbReference type="GO" id="GO:0051384">
    <property type="term" value="P:response to glucocorticoid"/>
    <property type="evidence" value="ECO:0000250"/>
    <property type="project" value="UniProtKB"/>
</dbReference>
<dbReference type="GO" id="GO:0002237">
    <property type="term" value="P:response to molecule of bacterial origin"/>
    <property type="evidence" value="ECO:0000250"/>
    <property type="project" value="UniProtKB"/>
</dbReference>
<dbReference type="FunFam" id="1.20.1250.10:FF:000011">
    <property type="entry name" value="Interleukin-10"/>
    <property type="match status" value="1"/>
</dbReference>
<dbReference type="Gene3D" id="1.20.1250.10">
    <property type="match status" value="1"/>
</dbReference>
<dbReference type="InterPro" id="IPR009079">
    <property type="entry name" value="4_helix_cytokine-like_core"/>
</dbReference>
<dbReference type="InterPro" id="IPR000098">
    <property type="entry name" value="IL-10"/>
</dbReference>
<dbReference type="InterPro" id="IPR020443">
    <property type="entry name" value="IL-10/19/20/24/26"/>
</dbReference>
<dbReference type="InterPro" id="IPR020423">
    <property type="entry name" value="IL-10_CS"/>
</dbReference>
<dbReference type="PANTHER" id="PTHR48482:SF5">
    <property type="entry name" value="INTERLEUKIN-10"/>
    <property type="match status" value="1"/>
</dbReference>
<dbReference type="PANTHER" id="PTHR48482">
    <property type="entry name" value="INTERLEUKIN-19-RELATED"/>
    <property type="match status" value="1"/>
</dbReference>
<dbReference type="Pfam" id="PF00726">
    <property type="entry name" value="IL10"/>
    <property type="match status" value="1"/>
</dbReference>
<dbReference type="PRINTS" id="PR01294">
    <property type="entry name" value="INTRLEUKIN10"/>
</dbReference>
<dbReference type="SMART" id="SM00188">
    <property type="entry name" value="IL10"/>
    <property type="match status" value="1"/>
</dbReference>
<dbReference type="SUPFAM" id="SSF47266">
    <property type="entry name" value="4-helical cytokines"/>
    <property type="match status" value="1"/>
</dbReference>
<dbReference type="PROSITE" id="PS00520">
    <property type="entry name" value="INTERLEUKIN_10"/>
    <property type="match status" value="1"/>
</dbReference>
<feature type="signal peptide" evidence="4">
    <location>
        <begin position="1"/>
        <end position="18"/>
    </location>
</feature>
<feature type="chain" id="PRO_0000015369" description="Interleukin-10">
    <location>
        <begin position="19"/>
        <end position="178"/>
    </location>
</feature>
<feature type="glycosylation site" description="N-linked (GlcNAc...) asparagine" evidence="4">
    <location>
        <position position="134"/>
    </location>
</feature>
<feature type="disulfide bond" evidence="1">
    <location>
        <begin position="30"/>
        <end position="126"/>
    </location>
</feature>
<feature type="disulfide bond" evidence="1">
    <location>
        <begin position="80"/>
        <end position="132"/>
    </location>
</feature>
<reference key="1">
    <citation type="journal article" date="2005" name="Cytokine">
        <title>Interleukin-10 regulates arterial pressure in early primate pregnancy.</title>
        <authorList>
            <person name="Orange S."/>
            <person name="Rasko J.E.J."/>
            <person name="Thompson J.F."/>
            <person name="Vaughan J."/>
            <person name="Olive E."/>
            <person name="Pedler M."/>
            <person name="Horvath J.S."/>
            <person name="Hennessy A."/>
        </authorList>
    </citation>
    <scope>NUCLEOTIDE SEQUENCE [MRNA]</scope>
    <source>
        <tissue>Liver</tissue>
    </source>
</reference>
<comment type="function">
    <text evidence="2 3">Major immune regulatory cytokine that acts on many cells of the immune system where it has profound anti-inflammatory functions, limiting excessive tissue disruption caused by inflammation. Mechanistically, IL10 binds to its heterotetrameric receptor comprising IL10RA and IL10RB leading to JAK1 and STAT2-mediated phosphorylation of STAT3. In turn, STAT3 translocates to the nucleus where it drives expression of anti-inflammatory mediators. Targets antigen-presenting cells (APCs) such as macrophages and monocytes and inhibits their release of pro-inflammatory cytokines including granulocyte-macrophage colony-stimulating factor /GM-CSF, granulocyte colony-stimulating factor/G-CSF, IL-1 alpha, IL-1 beta, IL-6, IL-8 and TNF-alpha. Also interferes with antigen presentation by reducing the expression of MHC-class II and co-stimulatory molecules, thereby inhibiting their ability to induce T cell activation (By similarity). In addition, controls the inflammatory response of macrophages by reprogramming essential metabolic pathways including mTOR signaling (By similarity).</text>
</comment>
<comment type="subunit">
    <text evidence="3">Homodimer. Interacts with IL10RA and IL10RB.</text>
</comment>
<comment type="subcellular location">
    <subcellularLocation>
        <location evidence="3">Secreted</location>
    </subcellularLocation>
</comment>
<comment type="similarity">
    <text evidence="5">Belongs to the IL-10 family.</text>
</comment>
<sequence>MHSSALLCCLVVLTGVRASPGQGTQSENSCTRFPGNLPHMLRDLRDAFSRVKTFFQMKDQLDNILLKESLLEDFKGYLGCQALSEMIQFYLEEVMPQAENHDPDIKEHVNSLGENLKTLRLRLRRCHRFLPCENKSKAVEQVKNAFSKLQEKGVYKAMSEFDIFINYIEAYMTMKIQN</sequence>
<proteinExistence type="evidence at transcript level"/>
<evidence type="ECO:0000250" key="1"/>
<evidence type="ECO:0000250" key="2">
    <source>
        <dbReference type="UniProtKB" id="P18893"/>
    </source>
</evidence>
<evidence type="ECO:0000250" key="3">
    <source>
        <dbReference type="UniProtKB" id="P22301"/>
    </source>
</evidence>
<evidence type="ECO:0000255" key="4"/>
<evidence type="ECO:0000305" key="5"/>
<protein>
    <recommendedName>
        <fullName>Interleukin-10</fullName>
        <shortName>IL-10</shortName>
    </recommendedName>
    <alternativeName>
        <fullName>Cytokine synthesis inhibitory factor</fullName>
        <shortName>CSIF</shortName>
    </alternativeName>
</protein>
<gene>
    <name type="primary">IL10</name>
</gene>
<organism>
    <name type="scientific">Papio hamadryas</name>
    <name type="common">Hamadryas baboon</name>
    <dbReference type="NCBI Taxonomy" id="9557"/>
    <lineage>
        <taxon>Eukaryota</taxon>
        <taxon>Metazoa</taxon>
        <taxon>Chordata</taxon>
        <taxon>Craniata</taxon>
        <taxon>Vertebrata</taxon>
        <taxon>Euteleostomi</taxon>
        <taxon>Mammalia</taxon>
        <taxon>Eutheria</taxon>
        <taxon>Euarchontoglires</taxon>
        <taxon>Primates</taxon>
        <taxon>Haplorrhini</taxon>
        <taxon>Catarrhini</taxon>
        <taxon>Cercopithecidae</taxon>
        <taxon>Cercopithecinae</taxon>
        <taxon>Papio</taxon>
    </lineage>
</organism>